<comment type="function">
    <text evidence="1">Catalyzes the reduction of the glycolytic intermediate dihydroxyacetone phosphate (DHAP) to sn-glycerol 3-phosphate (G3P), the key precursor for phospholipid synthesis.</text>
</comment>
<comment type="catalytic activity">
    <reaction evidence="1">
        <text>sn-glycerol 3-phosphate + NAD(+) = dihydroxyacetone phosphate + NADH + H(+)</text>
        <dbReference type="Rhea" id="RHEA:11092"/>
        <dbReference type="ChEBI" id="CHEBI:15378"/>
        <dbReference type="ChEBI" id="CHEBI:57540"/>
        <dbReference type="ChEBI" id="CHEBI:57597"/>
        <dbReference type="ChEBI" id="CHEBI:57642"/>
        <dbReference type="ChEBI" id="CHEBI:57945"/>
        <dbReference type="EC" id="1.1.1.94"/>
    </reaction>
    <physiologicalReaction direction="right-to-left" evidence="1">
        <dbReference type="Rhea" id="RHEA:11094"/>
    </physiologicalReaction>
</comment>
<comment type="catalytic activity">
    <reaction evidence="1">
        <text>sn-glycerol 3-phosphate + NADP(+) = dihydroxyacetone phosphate + NADPH + H(+)</text>
        <dbReference type="Rhea" id="RHEA:11096"/>
        <dbReference type="ChEBI" id="CHEBI:15378"/>
        <dbReference type="ChEBI" id="CHEBI:57597"/>
        <dbReference type="ChEBI" id="CHEBI:57642"/>
        <dbReference type="ChEBI" id="CHEBI:57783"/>
        <dbReference type="ChEBI" id="CHEBI:58349"/>
        <dbReference type="EC" id="1.1.1.94"/>
    </reaction>
    <physiologicalReaction direction="right-to-left" evidence="1">
        <dbReference type="Rhea" id="RHEA:11098"/>
    </physiologicalReaction>
</comment>
<comment type="pathway">
    <text evidence="1">Membrane lipid metabolism; glycerophospholipid metabolism.</text>
</comment>
<comment type="subcellular location">
    <subcellularLocation>
        <location evidence="1">Cytoplasm</location>
    </subcellularLocation>
</comment>
<comment type="similarity">
    <text evidence="1">Belongs to the NAD-dependent glycerol-3-phosphate dehydrogenase family.</text>
</comment>
<proteinExistence type="inferred from homology"/>
<accession>Q31E81</accession>
<sequence>MTIANKPLTIAVLGAGAWGSALAIHLSRIGHQVKLWDHNPENAATLESARENVRYLKGVPFPDALSVQSDLKVTLADVDAVLMVVPSQAFREVLQKMHHIMMGSKSHYHLAWATKGFEPETSLMLHEIVQQELGEQISFAVLSGPTFAAEVARGLPTAMVSASRDQQEAQFWADAFHCDTFRMYTQSDVVGVEIGGAYKNIMAIATGLSDGLRLGANARAALIGRGMVEMMRFGDALGAKHETMMGLSGLGDLVLTCTDDLSRNRRFGLMLAQSQRPAEDVIEEIGQVVEGVKAVKAVKLIADKYQLDLPIMEQVYNIIVGQSTAEQAVKELMRRHGRSELEFG</sequence>
<protein>
    <recommendedName>
        <fullName evidence="1">Glycerol-3-phosphate dehydrogenase [NAD(P)+]</fullName>
        <ecNumber evidence="1">1.1.1.94</ecNumber>
    </recommendedName>
    <alternativeName>
        <fullName evidence="1">NAD(P)(+)-dependent glycerol-3-phosphate dehydrogenase</fullName>
    </alternativeName>
    <alternativeName>
        <fullName evidence="1">NAD(P)H-dependent dihydroxyacetone-phosphate reductase</fullName>
    </alternativeName>
</protein>
<evidence type="ECO:0000255" key="1">
    <source>
        <dbReference type="HAMAP-Rule" id="MF_00394"/>
    </source>
</evidence>
<dbReference type="EC" id="1.1.1.94" evidence="1"/>
<dbReference type="EMBL" id="CP000109">
    <property type="protein sequence ID" value="ABB42542.1"/>
    <property type="molecule type" value="Genomic_DNA"/>
</dbReference>
<dbReference type="SMR" id="Q31E81"/>
<dbReference type="STRING" id="317025.Tcr_1952"/>
<dbReference type="KEGG" id="tcx:Tcr_1952"/>
<dbReference type="eggNOG" id="COG0240">
    <property type="taxonomic scope" value="Bacteria"/>
</dbReference>
<dbReference type="HOGENOM" id="CLU_033449_0_2_6"/>
<dbReference type="OrthoDB" id="9812273at2"/>
<dbReference type="UniPathway" id="UPA00940"/>
<dbReference type="GO" id="GO:0005829">
    <property type="term" value="C:cytosol"/>
    <property type="evidence" value="ECO:0007669"/>
    <property type="project" value="TreeGrafter"/>
</dbReference>
<dbReference type="GO" id="GO:0047952">
    <property type="term" value="F:glycerol-3-phosphate dehydrogenase [NAD(P)+] activity"/>
    <property type="evidence" value="ECO:0007669"/>
    <property type="project" value="UniProtKB-UniRule"/>
</dbReference>
<dbReference type="GO" id="GO:0051287">
    <property type="term" value="F:NAD binding"/>
    <property type="evidence" value="ECO:0007669"/>
    <property type="project" value="InterPro"/>
</dbReference>
<dbReference type="GO" id="GO:0005975">
    <property type="term" value="P:carbohydrate metabolic process"/>
    <property type="evidence" value="ECO:0007669"/>
    <property type="project" value="InterPro"/>
</dbReference>
<dbReference type="GO" id="GO:0046167">
    <property type="term" value="P:glycerol-3-phosphate biosynthetic process"/>
    <property type="evidence" value="ECO:0007669"/>
    <property type="project" value="UniProtKB-UniRule"/>
</dbReference>
<dbReference type="GO" id="GO:0046168">
    <property type="term" value="P:glycerol-3-phosphate catabolic process"/>
    <property type="evidence" value="ECO:0007669"/>
    <property type="project" value="InterPro"/>
</dbReference>
<dbReference type="GO" id="GO:0046474">
    <property type="term" value="P:glycerophospholipid biosynthetic process"/>
    <property type="evidence" value="ECO:0007669"/>
    <property type="project" value="TreeGrafter"/>
</dbReference>
<dbReference type="FunFam" id="1.10.1040.10:FF:000001">
    <property type="entry name" value="Glycerol-3-phosphate dehydrogenase [NAD(P)+]"/>
    <property type="match status" value="1"/>
</dbReference>
<dbReference type="FunFam" id="3.40.50.720:FF:000019">
    <property type="entry name" value="Glycerol-3-phosphate dehydrogenase [NAD(P)+]"/>
    <property type="match status" value="1"/>
</dbReference>
<dbReference type="Gene3D" id="1.10.1040.10">
    <property type="entry name" value="N-(1-d-carboxylethyl)-l-norvaline Dehydrogenase, domain 2"/>
    <property type="match status" value="1"/>
</dbReference>
<dbReference type="Gene3D" id="3.40.50.720">
    <property type="entry name" value="NAD(P)-binding Rossmann-like Domain"/>
    <property type="match status" value="1"/>
</dbReference>
<dbReference type="HAMAP" id="MF_00394">
    <property type="entry name" value="NAD_Glyc3P_dehydrog"/>
    <property type="match status" value="1"/>
</dbReference>
<dbReference type="InterPro" id="IPR008927">
    <property type="entry name" value="6-PGluconate_DH-like_C_sf"/>
</dbReference>
<dbReference type="InterPro" id="IPR013328">
    <property type="entry name" value="6PGD_dom2"/>
</dbReference>
<dbReference type="InterPro" id="IPR006168">
    <property type="entry name" value="G3P_DH_NAD-dep"/>
</dbReference>
<dbReference type="InterPro" id="IPR006109">
    <property type="entry name" value="G3P_DH_NAD-dep_C"/>
</dbReference>
<dbReference type="InterPro" id="IPR011128">
    <property type="entry name" value="G3P_DH_NAD-dep_N"/>
</dbReference>
<dbReference type="InterPro" id="IPR036291">
    <property type="entry name" value="NAD(P)-bd_dom_sf"/>
</dbReference>
<dbReference type="NCBIfam" id="NF000940">
    <property type="entry name" value="PRK00094.1-2"/>
    <property type="match status" value="1"/>
</dbReference>
<dbReference type="NCBIfam" id="NF000942">
    <property type="entry name" value="PRK00094.1-4"/>
    <property type="match status" value="1"/>
</dbReference>
<dbReference type="PANTHER" id="PTHR11728">
    <property type="entry name" value="GLYCEROL-3-PHOSPHATE DEHYDROGENASE"/>
    <property type="match status" value="1"/>
</dbReference>
<dbReference type="PANTHER" id="PTHR11728:SF1">
    <property type="entry name" value="GLYCEROL-3-PHOSPHATE DEHYDROGENASE [NAD(+)] 2, CHLOROPLASTIC"/>
    <property type="match status" value="1"/>
</dbReference>
<dbReference type="Pfam" id="PF07479">
    <property type="entry name" value="NAD_Gly3P_dh_C"/>
    <property type="match status" value="1"/>
</dbReference>
<dbReference type="Pfam" id="PF01210">
    <property type="entry name" value="NAD_Gly3P_dh_N"/>
    <property type="match status" value="1"/>
</dbReference>
<dbReference type="PIRSF" id="PIRSF000114">
    <property type="entry name" value="Glycerol-3-P_dh"/>
    <property type="match status" value="1"/>
</dbReference>
<dbReference type="PRINTS" id="PR00077">
    <property type="entry name" value="GPDHDRGNASE"/>
</dbReference>
<dbReference type="SUPFAM" id="SSF48179">
    <property type="entry name" value="6-phosphogluconate dehydrogenase C-terminal domain-like"/>
    <property type="match status" value="1"/>
</dbReference>
<dbReference type="SUPFAM" id="SSF51735">
    <property type="entry name" value="NAD(P)-binding Rossmann-fold domains"/>
    <property type="match status" value="1"/>
</dbReference>
<dbReference type="PROSITE" id="PS00957">
    <property type="entry name" value="NAD_G3PDH"/>
    <property type="match status" value="1"/>
</dbReference>
<name>GPDA_HYDCU</name>
<organism>
    <name type="scientific">Hydrogenovibrio crunogenus (strain DSM 25203 / XCL-2)</name>
    <name type="common">Thiomicrospira crunogena</name>
    <dbReference type="NCBI Taxonomy" id="317025"/>
    <lineage>
        <taxon>Bacteria</taxon>
        <taxon>Pseudomonadati</taxon>
        <taxon>Pseudomonadota</taxon>
        <taxon>Gammaproteobacteria</taxon>
        <taxon>Thiotrichales</taxon>
        <taxon>Piscirickettsiaceae</taxon>
        <taxon>Hydrogenovibrio</taxon>
    </lineage>
</organism>
<feature type="chain" id="PRO_0000255392" description="Glycerol-3-phosphate dehydrogenase [NAD(P)+]">
    <location>
        <begin position="1"/>
        <end position="344"/>
    </location>
</feature>
<feature type="active site" description="Proton acceptor" evidence="1">
    <location>
        <position position="199"/>
    </location>
</feature>
<feature type="binding site" evidence="1">
    <location>
        <position position="18"/>
    </location>
    <ligand>
        <name>NADPH</name>
        <dbReference type="ChEBI" id="CHEBI:57783"/>
    </ligand>
</feature>
<feature type="binding site" evidence="1">
    <location>
        <position position="38"/>
    </location>
    <ligand>
        <name>NADPH</name>
        <dbReference type="ChEBI" id="CHEBI:57783"/>
    </ligand>
</feature>
<feature type="binding site" evidence="1">
    <location>
        <position position="115"/>
    </location>
    <ligand>
        <name>NADPH</name>
        <dbReference type="ChEBI" id="CHEBI:57783"/>
    </ligand>
</feature>
<feature type="binding site" evidence="1">
    <location>
        <position position="115"/>
    </location>
    <ligand>
        <name>sn-glycerol 3-phosphate</name>
        <dbReference type="ChEBI" id="CHEBI:57597"/>
    </ligand>
</feature>
<feature type="binding site" evidence="1">
    <location>
        <position position="144"/>
    </location>
    <ligand>
        <name>sn-glycerol 3-phosphate</name>
        <dbReference type="ChEBI" id="CHEBI:57597"/>
    </ligand>
</feature>
<feature type="binding site" evidence="1">
    <location>
        <position position="146"/>
    </location>
    <ligand>
        <name>sn-glycerol 3-phosphate</name>
        <dbReference type="ChEBI" id="CHEBI:57597"/>
    </ligand>
</feature>
<feature type="binding site" evidence="1">
    <location>
        <position position="148"/>
    </location>
    <ligand>
        <name>NADPH</name>
        <dbReference type="ChEBI" id="CHEBI:57783"/>
    </ligand>
</feature>
<feature type="binding site" evidence="1">
    <location>
        <position position="199"/>
    </location>
    <ligand>
        <name>sn-glycerol 3-phosphate</name>
        <dbReference type="ChEBI" id="CHEBI:57597"/>
    </ligand>
</feature>
<feature type="binding site" evidence="1">
    <location>
        <position position="252"/>
    </location>
    <ligand>
        <name>sn-glycerol 3-phosphate</name>
        <dbReference type="ChEBI" id="CHEBI:57597"/>
    </ligand>
</feature>
<feature type="binding site" evidence="1">
    <location>
        <position position="262"/>
    </location>
    <ligand>
        <name>sn-glycerol 3-phosphate</name>
        <dbReference type="ChEBI" id="CHEBI:57597"/>
    </ligand>
</feature>
<feature type="binding site" evidence="1">
    <location>
        <position position="263"/>
    </location>
    <ligand>
        <name>NADPH</name>
        <dbReference type="ChEBI" id="CHEBI:57783"/>
    </ligand>
</feature>
<feature type="binding site" evidence="1">
    <location>
        <position position="263"/>
    </location>
    <ligand>
        <name>sn-glycerol 3-phosphate</name>
        <dbReference type="ChEBI" id="CHEBI:57597"/>
    </ligand>
</feature>
<feature type="binding site" evidence="1">
    <location>
        <position position="264"/>
    </location>
    <ligand>
        <name>sn-glycerol 3-phosphate</name>
        <dbReference type="ChEBI" id="CHEBI:57597"/>
    </ligand>
</feature>
<feature type="binding site" evidence="1">
    <location>
        <position position="288"/>
    </location>
    <ligand>
        <name>NADPH</name>
        <dbReference type="ChEBI" id="CHEBI:57783"/>
    </ligand>
</feature>
<feature type="binding site" evidence="1">
    <location>
        <position position="290"/>
    </location>
    <ligand>
        <name>NADPH</name>
        <dbReference type="ChEBI" id="CHEBI:57783"/>
    </ligand>
</feature>
<keyword id="KW-0963">Cytoplasm</keyword>
<keyword id="KW-0444">Lipid biosynthesis</keyword>
<keyword id="KW-0443">Lipid metabolism</keyword>
<keyword id="KW-0520">NAD</keyword>
<keyword id="KW-0521">NADP</keyword>
<keyword id="KW-0547">Nucleotide-binding</keyword>
<keyword id="KW-0560">Oxidoreductase</keyword>
<keyword id="KW-0594">Phospholipid biosynthesis</keyword>
<keyword id="KW-1208">Phospholipid metabolism</keyword>
<reference key="1">
    <citation type="journal article" date="2006" name="PLoS Biol.">
        <title>The genome of deep-sea vent chemolithoautotroph Thiomicrospira crunogena XCL-2.</title>
        <authorList>
            <person name="Scott K.M."/>
            <person name="Sievert S.M."/>
            <person name="Abril F.N."/>
            <person name="Ball L.A."/>
            <person name="Barrett C.J."/>
            <person name="Blake R.A."/>
            <person name="Boller A.J."/>
            <person name="Chain P.S.G."/>
            <person name="Clark J.A."/>
            <person name="Davis C.R."/>
            <person name="Detter C."/>
            <person name="Do K.F."/>
            <person name="Dobrinski K.P."/>
            <person name="Faza B.I."/>
            <person name="Fitzpatrick K.A."/>
            <person name="Freyermuth S.K."/>
            <person name="Harmer T.L."/>
            <person name="Hauser L.J."/>
            <person name="Huegler M."/>
            <person name="Kerfeld C.A."/>
            <person name="Klotz M.G."/>
            <person name="Kong W.W."/>
            <person name="Land M."/>
            <person name="Lapidus A."/>
            <person name="Larimer F.W."/>
            <person name="Longo D.L."/>
            <person name="Lucas S."/>
            <person name="Malfatti S.A."/>
            <person name="Massey S.E."/>
            <person name="Martin D.D."/>
            <person name="McCuddin Z."/>
            <person name="Meyer F."/>
            <person name="Moore J.L."/>
            <person name="Ocampo L.H. Jr."/>
            <person name="Paul J.H."/>
            <person name="Paulsen I.T."/>
            <person name="Reep D.K."/>
            <person name="Ren Q."/>
            <person name="Ross R.L."/>
            <person name="Sato P.Y."/>
            <person name="Thomas P."/>
            <person name="Tinkham L.E."/>
            <person name="Zeruth G.T."/>
        </authorList>
    </citation>
    <scope>NUCLEOTIDE SEQUENCE [LARGE SCALE GENOMIC DNA]</scope>
    <source>
        <strain>DSM 25203 / XCL-2</strain>
    </source>
</reference>
<gene>
    <name evidence="1" type="primary">gpsA</name>
    <name type="ordered locus">Tcr_1952</name>
</gene>